<protein>
    <recommendedName>
        <fullName evidence="1">GTPase Obg</fullName>
        <ecNumber evidence="1">3.6.5.-</ecNumber>
    </recommendedName>
    <alternativeName>
        <fullName evidence="1">GTP-binding protein Obg</fullName>
    </alternativeName>
</protein>
<accession>A8Z631</accession>
<reference key="1">
    <citation type="journal article" date="2007" name="Proc. Natl. Acad. Sci. U.S.A.">
        <title>Parallel genomic evolution and metabolic interdependence in an ancient symbiosis.</title>
        <authorList>
            <person name="McCutcheon J.P."/>
            <person name="Moran N.A."/>
        </authorList>
    </citation>
    <scope>NUCLEOTIDE SEQUENCE [LARGE SCALE GENOMIC DNA]</scope>
    <source>
        <strain>GWSS</strain>
    </source>
</reference>
<sequence length="327" mass="36759">MLNKFTDFIKIYCKSGDGGSGIIHFRKEKFINRGGPDGGDGGKGGNILIRGNNKLFTISHLKYKKHIIAENGKNGGRNRITGSNGKDSIIEVPIGTIVKDIYNNIIIEILNNNEEKILLFGGKGGKGNCHFKNSLCKTPFYSEKGESGKEFIFVLELKILADVGLIGLPNSGKSTLISMITSSKPKIDNYPFTTLNTNIGVLNYKNFKKIVIADIPGIIKGASKGKGLGFEFLKHIQRNKIIVFILSAEVIYYKKYYNIIINELNFFDKNILKKKRLLVISKSDLLDQELKYEIIKELPKFEKYIFISSFSKEGLYELIYYICNILS</sequence>
<gene>
    <name evidence="1" type="primary">obg</name>
    <name type="ordered locus">SMGWSS_181</name>
</gene>
<feature type="chain" id="PRO_0000386326" description="GTPase Obg">
    <location>
        <begin position="1"/>
        <end position="327"/>
    </location>
</feature>
<feature type="domain" description="Obg" evidence="2">
    <location>
        <begin position="3"/>
        <end position="160"/>
    </location>
</feature>
<feature type="domain" description="OBG-type G" evidence="1">
    <location>
        <begin position="161"/>
        <end position="327"/>
    </location>
</feature>
<feature type="binding site" evidence="1">
    <location>
        <begin position="167"/>
        <end position="174"/>
    </location>
    <ligand>
        <name>GTP</name>
        <dbReference type="ChEBI" id="CHEBI:37565"/>
    </ligand>
</feature>
<feature type="binding site" evidence="1">
    <location>
        <position position="174"/>
    </location>
    <ligand>
        <name>Mg(2+)</name>
        <dbReference type="ChEBI" id="CHEBI:18420"/>
    </ligand>
</feature>
<feature type="binding site" evidence="1">
    <location>
        <begin position="192"/>
        <end position="196"/>
    </location>
    <ligand>
        <name>GTP</name>
        <dbReference type="ChEBI" id="CHEBI:37565"/>
    </ligand>
</feature>
<feature type="binding site" evidence="1">
    <location>
        <position position="194"/>
    </location>
    <ligand>
        <name>Mg(2+)</name>
        <dbReference type="ChEBI" id="CHEBI:18420"/>
    </ligand>
</feature>
<feature type="binding site" evidence="1">
    <location>
        <begin position="214"/>
        <end position="217"/>
    </location>
    <ligand>
        <name>GTP</name>
        <dbReference type="ChEBI" id="CHEBI:37565"/>
    </ligand>
</feature>
<feature type="binding site" evidence="1">
    <location>
        <begin position="281"/>
        <end position="284"/>
    </location>
    <ligand>
        <name>GTP</name>
        <dbReference type="ChEBI" id="CHEBI:37565"/>
    </ligand>
</feature>
<feature type="binding site" evidence="1">
    <location>
        <begin position="308"/>
        <end position="310"/>
    </location>
    <ligand>
        <name>GTP</name>
        <dbReference type="ChEBI" id="CHEBI:37565"/>
    </ligand>
</feature>
<comment type="function">
    <text evidence="1">An essential GTPase which binds GTP, GDP and possibly (p)ppGpp with moderate affinity, with high nucleotide exchange rates and a fairly low GTP hydrolysis rate. Plays a role in control of the cell cycle, stress response, ribosome biogenesis and in those bacteria that undergo differentiation, in morphogenesis control.</text>
</comment>
<comment type="cofactor">
    <cofactor evidence="1">
        <name>Mg(2+)</name>
        <dbReference type="ChEBI" id="CHEBI:18420"/>
    </cofactor>
</comment>
<comment type="subunit">
    <text evidence="1">Monomer.</text>
</comment>
<comment type="subcellular location">
    <subcellularLocation>
        <location evidence="1">Cytoplasm</location>
    </subcellularLocation>
</comment>
<comment type="similarity">
    <text evidence="1">Belongs to the TRAFAC class OBG-HflX-like GTPase superfamily. OBG GTPase family.</text>
</comment>
<dbReference type="EC" id="3.6.5.-" evidence="1"/>
<dbReference type="EMBL" id="CP000770">
    <property type="protein sequence ID" value="ABS30582.1"/>
    <property type="molecule type" value="Genomic_DNA"/>
</dbReference>
<dbReference type="SMR" id="A8Z631"/>
<dbReference type="STRING" id="444179.SMGWSS_181"/>
<dbReference type="KEGG" id="smg:SMGWSS_181"/>
<dbReference type="HOGENOM" id="CLU_011747_2_0_10"/>
<dbReference type="Proteomes" id="UP000000781">
    <property type="component" value="Chromosome"/>
</dbReference>
<dbReference type="GO" id="GO:0005737">
    <property type="term" value="C:cytoplasm"/>
    <property type="evidence" value="ECO:0007669"/>
    <property type="project" value="UniProtKB-SubCell"/>
</dbReference>
<dbReference type="GO" id="GO:0005525">
    <property type="term" value="F:GTP binding"/>
    <property type="evidence" value="ECO:0007669"/>
    <property type="project" value="UniProtKB-UniRule"/>
</dbReference>
<dbReference type="GO" id="GO:0003924">
    <property type="term" value="F:GTPase activity"/>
    <property type="evidence" value="ECO:0007669"/>
    <property type="project" value="UniProtKB-UniRule"/>
</dbReference>
<dbReference type="GO" id="GO:0000287">
    <property type="term" value="F:magnesium ion binding"/>
    <property type="evidence" value="ECO:0007669"/>
    <property type="project" value="InterPro"/>
</dbReference>
<dbReference type="GO" id="GO:0042254">
    <property type="term" value="P:ribosome biogenesis"/>
    <property type="evidence" value="ECO:0007669"/>
    <property type="project" value="UniProtKB-UniRule"/>
</dbReference>
<dbReference type="CDD" id="cd01898">
    <property type="entry name" value="Obg"/>
    <property type="match status" value="1"/>
</dbReference>
<dbReference type="FunFam" id="2.70.210.12:FF:000001">
    <property type="entry name" value="GTPase Obg"/>
    <property type="match status" value="1"/>
</dbReference>
<dbReference type="Gene3D" id="2.70.210.12">
    <property type="entry name" value="GTP1/OBG domain"/>
    <property type="match status" value="1"/>
</dbReference>
<dbReference type="Gene3D" id="3.40.50.300">
    <property type="entry name" value="P-loop containing nucleotide triphosphate hydrolases"/>
    <property type="match status" value="1"/>
</dbReference>
<dbReference type="HAMAP" id="MF_01454">
    <property type="entry name" value="GTPase_Obg"/>
    <property type="match status" value="1"/>
</dbReference>
<dbReference type="InterPro" id="IPR031167">
    <property type="entry name" value="G_OBG"/>
</dbReference>
<dbReference type="InterPro" id="IPR006073">
    <property type="entry name" value="GTP-bd"/>
</dbReference>
<dbReference type="InterPro" id="IPR014100">
    <property type="entry name" value="GTP-bd_Obg/CgtA"/>
</dbReference>
<dbReference type="InterPro" id="IPR006074">
    <property type="entry name" value="GTP1-OBG_CS"/>
</dbReference>
<dbReference type="InterPro" id="IPR006169">
    <property type="entry name" value="GTP1_OBG_dom"/>
</dbReference>
<dbReference type="InterPro" id="IPR036726">
    <property type="entry name" value="GTP1_OBG_dom_sf"/>
</dbReference>
<dbReference type="InterPro" id="IPR045086">
    <property type="entry name" value="OBG_GTPase"/>
</dbReference>
<dbReference type="InterPro" id="IPR027417">
    <property type="entry name" value="P-loop_NTPase"/>
</dbReference>
<dbReference type="InterPro" id="IPR005225">
    <property type="entry name" value="Small_GTP-bd"/>
</dbReference>
<dbReference type="NCBIfam" id="TIGR02729">
    <property type="entry name" value="Obg_CgtA"/>
    <property type="match status" value="1"/>
</dbReference>
<dbReference type="NCBIfam" id="NF008956">
    <property type="entry name" value="PRK12299.1"/>
    <property type="match status" value="1"/>
</dbReference>
<dbReference type="NCBIfam" id="TIGR00231">
    <property type="entry name" value="small_GTP"/>
    <property type="match status" value="1"/>
</dbReference>
<dbReference type="PANTHER" id="PTHR11702">
    <property type="entry name" value="DEVELOPMENTALLY REGULATED GTP-BINDING PROTEIN-RELATED"/>
    <property type="match status" value="1"/>
</dbReference>
<dbReference type="PANTHER" id="PTHR11702:SF31">
    <property type="entry name" value="MITOCHONDRIAL RIBOSOME-ASSOCIATED GTPASE 2"/>
    <property type="match status" value="1"/>
</dbReference>
<dbReference type="Pfam" id="PF01018">
    <property type="entry name" value="GTP1_OBG"/>
    <property type="match status" value="1"/>
</dbReference>
<dbReference type="Pfam" id="PF01926">
    <property type="entry name" value="MMR_HSR1"/>
    <property type="match status" value="1"/>
</dbReference>
<dbReference type="PIRSF" id="PIRSF002401">
    <property type="entry name" value="GTP_bd_Obg/CgtA"/>
    <property type="match status" value="1"/>
</dbReference>
<dbReference type="PRINTS" id="PR00326">
    <property type="entry name" value="GTP1OBG"/>
</dbReference>
<dbReference type="SUPFAM" id="SSF82051">
    <property type="entry name" value="Obg GTP-binding protein N-terminal domain"/>
    <property type="match status" value="1"/>
</dbReference>
<dbReference type="SUPFAM" id="SSF52540">
    <property type="entry name" value="P-loop containing nucleoside triphosphate hydrolases"/>
    <property type="match status" value="1"/>
</dbReference>
<dbReference type="PROSITE" id="PS51710">
    <property type="entry name" value="G_OBG"/>
    <property type="match status" value="1"/>
</dbReference>
<dbReference type="PROSITE" id="PS00905">
    <property type="entry name" value="GTP1_OBG"/>
    <property type="match status" value="1"/>
</dbReference>
<dbReference type="PROSITE" id="PS51883">
    <property type="entry name" value="OBG"/>
    <property type="match status" value="1"/>
</dbReference>
<keyword id="KW-0963">Cytoplasm</keyword>
<keyword id="KW-0342">GTP-binding</keyword>
<keyword id="KW-0378">Hydrolase</keyword>
<keyword id="KW-0460">Magnesium</keyword>
<keyword id="KW-0479">Metal-binding</keyword>
<keyword id="KW-0547">Nucleotide-binding</keyword>
<organism>
    <name type="scientific">Karelsulcia muelleri (strain GWSS)</name>
    <name type="common">Sulcia muelleri</name>
    <dbReference type="NCBI Taxonomy" id="444179"/>
    <lineage>
        <taxon>Bacteria</taxon>
        <taxon>Pseudomonadati</taxon>
        <taxon>Bacteroidota</taxon>
        <taxon>Flavobacteriia</taxon>
        <taxon>Flavobacteriales</taxon>
        <taxon>Candidatus Karelsulcia</taxon>
    </lineage>
</organism>
<name>OBG_KARMG</name>
<proteinExistence type="inferred from homology"/>
<evidence type="ECO:0000255" key="1">
    <source>
        <dbReference type="HAMAP-Rule" id="MF_01454"/>
    </source>
</evidence>
<evidence type="ECO:0000255" key="2">
    <source>
        <dbReference type="PROSITE-ProRule" id="PRU01231"/>
    </source>
</evidence>